<accession>Q7A0A4</accession>
<protein>
    <recommendedName>
        <fullName evidence="2">PTS system mannitol-specific EIICB component</fullName>
    </recommendedName>
    <alternativeName>
        <fullName evidence="2">EIICB-Mtl</fullName>
        <shortName evidence="2">EII-Mtl</shortName>
    </alternativeName>
    <domain>
        <recommendedName>
            <fullName evidence="2">Mannitol permease IIC component</fullName>
        </recommendedName>
        <alternativeName>
            <fullName evidence="2">PTS system mannitol-specific EIIC component</fullName>
        </alternativeName>
    </domain>
    <domain>
        <recommendedName>
            <fullName evidence="2">Mannitol-specific phosphotransferase enzyme IIB component</fullName>
            <ecNumber evidence="1 2">2.7.1.197</ecNumber>
        </recommendedName>
        <alternativeName>
            <fullName evidence="2">PTS system mannitol-specific EIIB component</fullName>
        </alternativeName>
    </domain>
</protein>
<name>PTMCB_STAAW</name>
<feature type="chain" id="PRO_0000186625" description="PTS system mannitol-specific EIICB component">
    <location>
        <begin position="1"/>
        <end position="512"/>
    </location>
</feature>
<feature type="topological domain" description="Cytoplasmic" evidence="1">
    <location>
        <begin position="1"/>
        <end position="28"/>
    </location>
</feature>
<feature type="transmembrane region" description="Helical" evidence="1">
    <location>
        <begin position="29"/>
        <end position="50"/>
    </location>
</feature>
<feature type="topological domain" description="Extracellular" evidence="1">
    <location>
        <begin position="51"/>
        <end position="54"/>
    </location>
</feature>
<feature type="transmembrane region" description="Helical" evidence="1">
    <location>
        <begin position="55"/>
        <end position="75"/>
    </location>
</feature>
<feature type="topological domain" description="Cytoplasmic" evidence="1">
    <location>
        <begin position="76"/>
        <end position="139"/>
    </location>
</feature>
<feature type="transmembrane region" description="Helical" evidence="1">
    <location>
        <begin position="140"/>
        <end position="161"/>
    </location>
</feature>
<feature type="topological domain" description="Extracellular" evidence="1">
    <location>
        <begin position="162"/>
        <end position="170"/>
    </location>
</feature>
<feature type="transmembrane region" description="Helical" evidence="1">
    <location>
        <begin position="171"/>
        <end position="191"/>
    </location>
</feature>
<feature type="topological domain" description="Cytoplasmic" evidence="1">
    <location>
        <begin position="192"/>
        <end position="278"/>
    </location>
</feature>
<feature type="transmembrane region" description="Helical" evidence="1">
    <location>
        <begin position="279"/>
        <end position="298"/>
    </location>
</feature>
<feature type="topological domain" description="Extracellular" evidence="1">
    <location>
        <begin position="299"/>
        <end position="318"/>
    </location>
</feature>
<feature type="transmembrane region" description="Helical" evidence="1">
    <location>
        <begin position="319"/>
        <end position="340"/>
    </location>
</feature>
<feature type="topological domain" description="Cytoplasmic" evidence="1">
    <location>
        <begin position="341"/>
        <end position="512"/>
    </location>
</feature>
<feature type="domain" description="PTS EIIC type-2" evidence="4">
    <location>
        <begin position="17"/>
        <end position="349"/>
    </location>
</feature>
<feature type="domain" description="PTS EIIB type-2" evidence="3">
    <location>
        <begin position="419"/>
        <end position="512"/>
    </location>
</feature>
<feature type="region of interest" description="Disordered" evidence="5">
    <location>
        <begin position="355"/>
        <end position="402"/>
    </location>
</feature>
<feature type="compositionally biased region" description="Low complexity" evidence="5">
    <location>
        <begin position="365"/>
        <end position="376"/>
    </location>
</feature>
<feature type="compositionally biased region" description="Polar residues" evidence="5">
    <location>
        <begin position="380"/>
        <end position="392"/>
    </location>
</feature>
<feature type="active site" description="Phosphocysteine intermediate; for EIIB activity" evidence="1 2">
    <location>
        <position position="425"/>
    </location>
</feature>
<feature type="modified residue" description="Phosphocysteine; by EIIA" evidence="1 2 3">
    <location>
        <position position="425"/>
    </location>
</feature>
<evidence type="ECO:0000250" key="1">
    <source>
        <dbReference type="UniProtKB" id="P00550"/>
    </source>
</evidence>
<evidence type="ECO:0000250" key="2">
    <source>
        <dbReference type="UniProtKB" id="P28008"/>
    </source>
</evidence>
<evidence type="ECO:0000255" key="3">
    <source>
        <dbReference type="PROSITE-ProRule" id="PRU00422"/>
    </source>
</evidence>
<evidence type="ECO:0000255" key="4">
    <source>
        <dbReference type="PROSITE-ProRule" id="PRU00427"/>
    </source>
</evidence>
<evidence type="ECO:0000256" key="5">
    <source>
        <dbReference type="SAM" id="MobiDB-lite"/>
    </source>
</evidence>
<gene>
    <name type="primary">mtlA</name>
    <name type="ordered locus">MW2082</name>
</gene>
<keyword id="KW-1003">Cell membrane</keyword>
<keyword id="KW-0418">Kinase</keyword>
<keyword id="KW-0472">Membrane</keyword>
<keyword id="KW-0597">Phosphoprotein</keyword>
<keyword id="KW-0598">Phosphotransferase system</keyword>
<keyword id="KW-0762">Sugar transport</keyword>
<keyword id="KW-0808">Transferase</keyword>
<keyword id="KW-0812">Transmembrane</keyword>
<keyword id="KW-1133">Transmembrane helix</keyword>
<keyword id="KW-0813">Transport</keyword>
<proteinExistence type="inferred from homology"/>
<sequence length="512" mass="55065">MSQTEEKKGIGRRVQAFGSFLSSMIMPNIGAFIAWGFIAAIFIDNGWLPNKDLATLAGPMITYLIPLLIAFSGGRLIYDLRGGIIAATATMGVIVALPDTPMLLGAMIMGPLVGWLMKKTDQLIQPRTPQGFEMLFNNFSAGILGFIMTIAGFKILAPLMKFIMHILSVAVEALVHAHLLPLVSILVEPAKIVFLNNAINHGVFTPLGADQAAKAGQSILYTIESNPGPGLGILLAYMIFGKGTAKATSYGAGIIHFLGGIHEIYFPYVLMRPLLFIAVILGGMTGVATYQATGFGFKSPASPGSFIVYCLNAPRGEFLHMLLGVFLAALVSFVVAALIMKFTREPKQDLEAATAQMENTKGKKSSVASKLVSSDKNVNTEENASGNVSETSSSDDDPEALLDNYNTEDVDAHNYNNINHVIFACDAGMGSSAMGASMLRNKFKKAGINDITVTNTAINQLPKDAQLVITQKKLTDRAIKQTPNAIHISVDNFLNSPRYEELLNNLKKDDQA</sequence>
<comment type="function">
    <text evidence="2">The phosphoenolpyruvate-dependent sugar phosphotransferase system (sugar PTS), a major carbohydrate active transport system, catalyzes the phosphorylation of incoming sugar substrates concomitantly with their translocation across the cell membrane. The enzyme II CmtAB PTS system is involved in D-mannitol transport.</text>
</comment>
<comment type="catalytic activity">
    <reaction evidence="1 2">
        <text>D-mannitol(out) + N(pros)-phospho-L-histidyl-[protein] = D-mannitol 1-phosphate(in) + L-histidyl-[protein]</text>
        <dbReference type="Rhea" id="RHEA:33363"/>
        <dbReference type="Rhea" id="RHEA-COMP:9745"/>
        <dbReference type="Rhea" id="RHEA-COMP:9746"/>
        <dbReference type="ChEBI" id="CHEBI:16899"/>
        <dbReference type="ChEBI" id="CHEBI:29979"/>
        <dbReference type="ChEBI" id="CHEBI:61381"/>
        <dbReference type="ChEBI" id="CHEBI:64837"/>
        <dbReference type="EC" id="2.7.1.197"/>
    </reaction>
</comment>
<comment type="subunit">
    <text evidence="2">Homodimer.</text>
</comment>
<comment type="subcellular location">
    <subcellularLocation>
        <location evidence="4">Cell membrane</location>
        <topology evidence="4">Multi-pass membrane protein</topology>
    </subcellularLocation>
</comment>
<comment type="domain">
    <text evidence="4">The EIIC type-2 domain forms the PTS system translocation channel and contains the specific substrate-binding site.</text>
</comment>
<comment type="domain">
    <text evidence="3">The PTS EIIB type-2 domain is phosphorylated by phospho-EIIA on a cysteinyl residue. Then, it transfers the phosphoryl group to the sugar substrate concomitantly with the sugar uptake processed by the PTS EIIC type-2 domain.</text>
</comment>
<reference key="1">
    <citation type="journal article" date="2002" name="Lancet">
        <title>Genome and virulence determinants of high virulence community-acquired MRSA.</title>
        <authorList>
            <person name="Baba T."/>
            <person name="Takeuchi F."/>
            <person name="Kuroda M."/>
            <person name="Yuzawa H."/>
            <person name="Aoki K."/>
            <person name="Oguchi A."/>
            <person name="Nagai Y."/>
            <person name="Iwama N."/>
            <person name="Asano K."/>
            <person name="Naimi T."/>
            <person name="Kuroda H."/>
            <person name="Cui L."/>
            <person name="Yamamoto K."/>
            <person name="Hiramatsu K."/>
        </authorList>
    </citation>
    <scope>NUCLEOTIDE SEQUENCE [LARGE SCALE GENOMIC DNA]</scope>
    <source>
        <strain>MW2</strain>
    </source>
</reference>
<organism>
    <name type="scientific">Staphylococcus aureus (strain MW2)</name>
    <dbReference type="NCBI Taxonomy" id="196620"/>
    <lineage>
        <taxon>Bacteria</taxon>
        <taxon>Bacillati</taxon>
        <taxon>Bacillota</taxon>
        <taxon>Bacilli</taxon>
        <taxon>Bacillales</taxon>
        <taxon>Staphylococcaceae</taxon>
        <taxon>Staphylococcus</taxon>
    </lineage>
</organism>
<dbReference type="EC" id="2.7.1.197" evidence="1 2"/>
<dbReference type="EMBL" id="BA000033">
    <property type="protein sequence ID" value="BAB95947.1"/>
    <property type="molecule type" value="Genomic_DNA"/>
</dbReference>
<dbReference type="RefSeq" id="WP_000083807.1">
    <property type="nucleotide sequence ID" value="NC_003923.1"/>
</dbReference>
<dbReference type="SMR" id="Q7A0A4"/>
<dbReference type="KEGG" id="sam:MW2082"/>
<dbReference type="HOGENOM" id="CLU_028721_2_1_9"/>
<dbReference type="GO" id="GO:0005886">
    <property type="term" value="C:plasma membrane"/>
    <property type="evidence" value="ECO:0007669"/>
    <property type="project" value="UniProtKB-SubCell"/>
</dbReference>
<dbReference type="GO" id="GO:0016301">
    <property type="term" value="F:kinase activity"/>
    <property type="evidence" value="ECO:0007669"/>
    <property type="project" value="UniProtKB-KW"/>
</dbReference>
<dbReference type="GO" id="GO:0022872">
    <property type="term" value="F:protein-N(PI)-phosphohistidine-mannitol phosphotransferase system transmembrane transporter activity"/>
    <property type="evidence" value="ECO:0007669"/>
    <property type="project" value="InterPro"/>
</dbReference>
<dbReference type="GO" id="GO:0090563">
    <property type="term" value="F:protein-phosphocysteine-sugar phosphotransferase activity"/>
    <property type="evidence" value="ECO:0007669"/>
    <property type="project" value="TreeGrafter"/>
</dbReference>
<dbReference type="GO" id="GO:0009401">
    <property type="term" value="P:phosphoenolpyruvate-dependent sugar phosphotransferase system"/>
    <property type="evidence" value="ECO:0007669"/>
    <property type="project" value="UniProtKB-KW"/>
</dbReference>
<dbReference type="CDD" id="cd05567">
    <property type="entry name" value="PTS_IIB_mannitol"/>
    <property type="match status" value="1"/>
</dbReference>
<dbReference type="FunFam" id="3.40.50.2300:FF:000047">
    <property type="entry name" value="PTS system mannitol-specific transporter subunit IICBA"/>
    <property type="match status" value="1"/>
</dbReference>
<dbReference type="Gene3D" id="3.40.50.2300">
    <property type="match status" value="1"/>
</dbReference>
<dbReference type="InterPro" id="IPR036095">
    <property type="entry name" value="PTS_EIIB-like_sf"/>
</dbReference>
<dbReference type="InterPro" id="IPR013011">
    <property type="entry name" value="PTS_EIIB_2"/>
</dbReference>
<dbReference type="InterPro" id="IPR003501">
    <property type="entry name" value="PTS_EIIB_2/3"/>
</dbReference>
<dbReference type="InterPro" id="IPR029503">
    <property type="entry name" value="PTS_EIIB_mannitol"/>
</dbReference>
<dbReference type="InterPro" id="IPR003352">
    <property type="entry name" value="PTS_EIIC"/>
</dbReference>
<dbReference type="InterPro" id="IPR013014">
    <property type="entry name" value="PTS_EIIC_2"/>
</dbReference>
<dbReference type="InterPro" id="IPR004718">
    <property type="entry name" value="PTS_IIC_mtl"/>
</dbReference>
<dbReference type="InterPro" id="IPR050893">
    <property type="entry name" value="Sugar_PTS"/>
</dbReference>
<dbReference type="NCBIfam" id="TIGR00851">
    <property type="entry name" value="mtlA"/>
    <property type="match status" value="1"/>
</dbReference>
<dbReference type="PANTHER" id="PTHR30181">
    <property type="entry name" value="MANNITOL PERMEASE IIC COMPONENT"/>
    <property type="match status" value="1"/>
</dbReference>
<dbReference type="PANTHER" id="PTHR30181:SF2">
    <property type="entry name" value="PTS SYSTEM MANNITOL-SPECIFIC EIICBA COMPONENT"/>
    <property type="match status" value="1"/>
</dbReference>
<dbReference type="Pfam" id="PF02378">
    <property type="entry name" value="PTS_EIIC"/>
    <property type="match status" value="1"/>
</dbReference>
<dbReference type="Pfam" id="PF02302">
    <property type="entry name" value="PTS_IIB"/>
    <property type="match status" value="1"/>
</dbReference>
<dbReference type="SUPFAM" id="SSF52794">
    <property type="entry name" value="PTS system IIB component-like"/>
    <property type="match status" value="1"/>
</dbReference>
<dbReference type="PROSITE" id="PS51099">
    <property type="entry name" value="PTS_EIIB_TYPE_2"/>
    <property type="match status" value="1"/>
</dbReference>
<dbReference type="PROSITE" id="PS51104">
    <property type="entry name" value="PTS_EIIC_TYPE_2"/>
    <property type="match status" value="1"/>
</dbReference>